<reference key="1">
    <citation type="journal article" date="2011" name="Appl. Environ. Microbiol.">
        <title>Genomic potential of Marinobacter aquaeolei, a biogeochemical 'opportunitroph'.</title>
        <authorList>
            <person name="Singer E."/>
            <person name="Webb E.A."/>
            <person name="Nelson W.C."/>
            <person name="Heidelberg J.F."/>
            <person name="Ivanova N."/>
            <person name="Pati A."/>
            <person name="Edwards K.J."/>
        </authorList>
    </citation>
    <scope>NUCLEOTIDE SEQUENCE [LARGE SCALE GENOMIC DNA]</scope>
    <source>
        <strain>ATCC 700491 / DSM 11845 / VT8</strain>
    </source>
</reference>
<dbReference type="EC" id="3.5.1.108" evidence="1"/>
<dbReference type="EMBL" id="CP000514">
    <property type="protein sequence ID" value="ABM19521.1"/>
    <property type="molecule type" value="Genomic_DNA"/>
</dbReference>
<dbReference type="RefSeq" id="WP_011785905.1">
    <property type="nucleotide sequence ID" value="NC_008740.1"/>
</dbReference>
<dbReference type="SMR" id="A1U3F2"/>
<dbReference type="STRING" id="351348.Maqu_2446"/>
<dbReference type="GeneID" id="31820300"/>
<dbReference type="KEGG" id="maq:Maqu_2446"/>
<dbReference type="eggNOG" id="COG0774">
    <property type="taxonomic scope" value="Bacteria"/>
</dbReference>
<dbReference type="HOGENOM" id="CLU_046528_1_0_6"/>
<dbReference type="OrthoDB" id="9802746at2"/>
<dbReference type="UniPathway" id="UPA00359">
    <property type="reaction ID" value="UER00478"/>
</dbReference>
<dbReference type="Proteomes" id="UP000000998">
    <property type="component" value="Chromosome"/>
</dbReference>
<dbReference type="GO" id="GO:0016020">
    <property type="term" value="C:membrane"/>
    <property type="evidence" value="ECO:0007669"/>
    <property type="project" value="GOC"/>
</dbReference>
<dbReference type="GO" id="GO:0046872">
    <property type="term" value="F:metal ion binding"/>
    <property type="evidence" value="ECO:0007669"/>
    <property type="project" value="UniProtKB-KW"/>
</dbReference>
<dbReference type="GO" id="GO:0103117">
    <property type="term" value="F:UDP-3-O-acyl-N-acetylglucosamine deacetylase activity"/>
    <property type="evidence" value="ECO:0007669"/>
    <property type="project" value="UniProtKB-UniRule"/>
</dbReference>
<dbReference type="GO" id="GO:0009245">
    <property type="term" value="P:lipid A biosynthetic process"/>
    <property type="evidence" value="ECO:0007669"/>
    <property type="project" value="UniProtKB-UniRule"/>
</dbReference>
<dbReference type="Gene3D" id="3.30.230.20">
    <property type="entry name" value="lpxc deacetylase, domain 1"/>
    <property type="match status" value="1"/>
</dbReference>
<dbReference type="Gene3D" id="3.30.1700.10">
    <property type="entry name" value="lpxc deacetylase, domain 2"/>
    <property type="match status" value="1"/>
</dbReference>
<dbReference type="HAMAP" id="MF_00388">
    <property type="entry name" value="LpxC"/>
    <property type="match status" value="1"/>
</dbReference>
<dbReference type="InterPro" id="IPR020568">
    <property type="entry name" value="Ribosomal_Su5_D2-typ_SF"/>
</dbReference>
<dbReference type="InterPro" id="IPR004463">
    <property type="entry name" value="UDP-acyl_GlcNac_deAcase"/>
</dbReference>
<dbReference type="InterPro" id="IPR011334">
    <property type="entry name" value="UDP-acyl_GlcNac_deAcase_C"/>
</dbReference>
<dbReference type="InterPro" id="IPR015870">
    <property type="entry name" value="UDP-acyl_N-AcGlcN_deAcase_N"/>
</dbReference>
<dbReference type="NCBIfam" id="TIGR00325">
    <property type="entry name" value="lpxC"/>
    <property type="match status" value="1"/>
</dbReference>
<dbReference type="PANTHER" id="PTHR33694">
    <property type="entry name" value="UDP-3-O-ACYL-N-ACETYLGLUCOSAMINE DEACETYLASE 1, MITOCHONDRIAL-RELATED"/>
    <property type="match status" value="1"/>
</dbReference>
<dbReference type="PANTHER" id="PTHR33694:SF1">
    <property type="entry name" value="UDP-3-O-ACYL-N-ACETYLGLUCOSAMINE DEACETYLASE 1, MITOCHONDRIAL-RELATED"/>
    <property type="match status" value="1"/>
</dbReference>
<dbReference type="Pfam" id="PF03331">
    <property type="entry name" value="LpxC"/>
    <property type="match status" value="1"/>
</dbReference>
<dbReference type="SUPFAM" id="SSF54211">
    <property type="entry name" value="Ribosomal protein S5 domain 2-like"/>
    <property type="match status" value="2"/>
</dbReference>
<gene>
    <name evidence="1" type="primary">lpxC</name>
    <name type="ordered locus">Maqu_2446</name>
</gene>
<sequence length="304" mass="33468">MIRQRTLKNTIRATGVGLHSGEKVYLTLKPAPVDTGIIFRRTDLDPMVEIRACAENVGETMLSTTLVKDGVRVATVEHLLSAMAGLGIDNCFVELSAAEVPIMDGSAGPFVFLLQSAGISEQEAAKRFIRIKREVTVEEGDKKATFLPFEGFKVSFGIDFDHPVFKGRAQTATVDFSSTSFVKEVSRARTFGFMRDIEKLRAMNLALGGSVDNAIVVDDYKILNEDGLRYDDEFVKHKVLDAIGDLYLLGNSLIGEFRGIKSGHDLNNKLLRKLRAEEDAWEVVTFDDEATAPISYMKPVLAAG</sequence>
<feature type="chain" id="PRO_1000013213" description="UDP-3-O-acyl-N-acetylglucosamine deacetylase">
    <location>
        <begin position="1"/>
        <end position="304"/>
    </location>
</feature>
<feature type="active site" description="Proton donor" evidence="1">
    <location>
        <position position="264"/>
    </location>
</feature>
<feature type="binding site" evidence="1">
    <location>
        <position position="78"/>
    </location>
    <ligand>
        <name>Zn(2+)</name>
        <dbReference type="ChEBI" id="CHEBI:29105"/>
    </ligand>
</feature>
<feature type="binding site" evidence="1">
    <location>
        <position position="237"/>
    </location>
    <ligand>
        <name>Zn(2+)</name>
        <dbReference type="ChEBI" id="CHEBI:29105"/>
    </ligand>
</feature>
<feature type="binding site" evidence="1">
    <location>
        <position position="241"/>
    </location>
    <ligand>
        <name>Zn(2+)</name>
        <dbReference type="ChEBI" id="CHEBI:29105"/>
    </ligand>
</feature>
<organism>
    <name type="scientific">Marinobacter nauticus (strain ATCC 700491 / DSM 11845 / VT8)</name>
    <name type="common">Marinobacter aquaeolei</name>
    <dbReference type="NCBI Taxonomy" id="351348"/>
    <lineage>
        <taxon>Bacteria</taxon>
        <taxon>Pseudomonadati</taxon>
        <taxon>Pseudomonadota</taxon>
        <taxon>Gammaproteobacteria</taxon>
        <taxon>Pseudomonadales</taxon>
        <taxon>Marinobacteraceae</taxon>
        <taxon>Marinobacter</taxon>
    </lineage>
</organism>
<proteinExistence type="inferred from homology"/>
<comment type="function">
    <text evidence="1">Catalyzes the hydrolysis of UDP-3-O-myristoyl-N-acetylglucosamine to form UDP-3-O-myristoylglucosamine and acetate, the committed step in lipid A biosynthesis.</text>
</comment>
<comment type="catalytic activity">
    <reaction evidence="1">
        <text>a UDP-3-O-[(3R)-3-hydroxyacyl]-N-acetyl-alpha-D-glucosamine + H2O = a UDP-3-O-[(3R)-3-hydroxyacyl]-alpha-D-glucosamine + acetate</text>
        <dbReference type="Rhea" id="RHEA:67816"/>
        <dbReference type="ChEBI" id="CHEBI:15377"/>
        <dbReference type="ChEBI" id="CHEBI:30089"/>
        <dbReference type="ChEBI" id="CHEBI:137740"/>
        <dbReference type="ChEBI" id="CHEBI:173225"/>
        <dbReference type="EC" id="3.5.1.108"/>
    </reaction>
</comment>
<comment type="cofactor">
    <cofactor evidence="1">
        <name>Zn(2+)</name>
        <dbReference type="ChEBI" id="CHEBI:29105"/>
    </cofactor>
</comment>
<comment type="pathway">
    <text evidence="1">Glycolipid biosynthesis; lipid IV(A) biosynthesis; lipid IV(A) from (3R)-3-hydroxytetradecanoyl-[acyl-carrier-protein] and UDP-N-acetyl-alpha-D-glucosamine: step 2/6.</text>
</comment>
<comment type="similarity">
    <text evidence="1">Belongs to the LpxC family.</text>
</comment>
<accession>A1U3F2</accession>
<evidence type="ECO:0000255" key="1">
    <source>
        <dbReference type="HAMAP-Rule" id="MF_00388"/>
    </source>
</evidence>
<name>LPXC_MARN8</name>
<keyword id="KW-0378">Hydrolase</keyword>
<keyword id="KW-0441">Lipid A biosynthesis</keyword>
<keyword id="KW-0444">Lipid biosynthesis</keyword>
<keyword id="KW-0443">Lipid metabolism</keyword>
<keyword id="KW-0479">Metal-binding</keyword>
<keyword id="KW-0862">Zinc</keyword>
<protein>
    <recommendedName>
        <fullName evidence="1">UDP-3-O-acyl-N-acetylglucosamine deacetylase</fullName>
        <shortName evidence="1">UDP-3-O-acyl-GlcNAc deacetylase</shortName>
        <ecNumber evidence="1">3.5.1.108</ecNumber>
    </recommendedName>
    <alternativeName>
        <fullName evidence="1">UDP-3-O-[R-3-hydroxymyristoyl]-N-acetylglucosamine deacetylase</fullName>
    </alternativeName>
</protein>